<organism>
    <name type="scientific">Callithrix jacchus</name>
    <name type="common">White-tufted-ear marmoset</name>
    <dbReference type="NCBI Taxonomy" id="9483"/>
    <lineage>
        <taxon>Eukaryota</taxon>
        <taxon>Metazoa</taxon>
        <taxon>Chordata</taxon>
        <taxon>Craniata</taxon>
        <taxon>Vertebrata</taxon>
        <taxon>Euteleostomi</taxon>
        <taxon>Mammalia</taxon>
        <taxon>Eutheria</taxon>
        <taxon>Euarchontoglires</taxon>
        <taxon>Primates</taxon>
        <taxon>Haplorrhini</taxon>
        <taxon>Platyrrhini</taxon>
        <taxon>Cebidae</taxon>
        <taxon>Callitrichinae</taxon>
        <taxon>Callithrix</taxon>
        <taxon>Callithrix</taxon>
    </lineage>
</organism>
<evidence type="ECO:0000250" key="1">
    <source>
        <dbReference type="UniProtKB" id="P36394"/>
    </source>
</evidence>
<evidence type="ECO:0000250" key="2">
    <source>
        <dbReference type="UniProtKB" id="Q05066"/>
    </source>
</evidence>
<evidence type="ECO:0000255" key="3">
    <source>
        <dbReference type="PROSITE-ProRule" id="PRU00267"/>
    </source>
</evidence>
<evidence type="ECO:0000256" key="4">
    <source>
        <dbReference type="SAM" id="MobiDB-lite"/>
    </source>
</evidence>
<evidence type="ECO:0000305" key="5"/>
<keyword id="KW-0010">Activator</keyword>
<keyword id="KW-0112">Calmodulin-binding</keyword>
<keyword id="KW-0963">Cytoplasm</keyword>
<keyword id="KW-0221">Differentiation</keyword>
<keyword id="KW-0238">DNA-binding</keyword>
<keyword id="KW-0539">Nucleus</keyword>
<keyword id="KW-1185">Reference proteome</keyword>
<keyword id="KW-0726">Sexual differentiation</keyword>
<keyword id="KW-0804">Transcription</keyword>
<keyword id="KW-0805">Transcription regulation</keyword>
<dbReference type="EMBL" id="X86386">
    <property type="protein sequence ID" value="CAA60146.1"/>
    <property type="molecule type" value="Genomic_DNA"/>
</dbReference>
<dbReference type="PIR" id="S35564">
    <property type="entry name" value="S35564"/>
</dbReference>
<dbReference type="RefSeq" id="XP_035145841.1">
    <property type="nucleotide sequence ID" value="XM_035289950.1"/>
</dbReference>
<dbReference type="SMR" id="P51501"/>
<dbReference type="FunCoup" id="P51501">
    <property type="interactions" value="12"/>
</dbReference>
<dbReference type="Ensembl" id="ENSCJAT00000120067.1">
    <property type="protein sequence ID" value="ENSCJAP00000090333.1"/>
    <property type="gene ID" value="ENSCJAG00000077540.1"/>
</dbReference>
<dbReference type="GeneID" id="118150935"/>
<dbReference type="GeneTree" id="ENSGT00940000165583"/>
<dbReference type="InParanoid" id="P51501"/>
<dbReference type="OMA" id="DCTKATH"/>
<dbReference type="OrthoDB" id="6247875at2759"/>
<dbReference type="Proteomes" id="UP000008225">
    <property type="component" value="Chromosome Y"/>
</dbReference>
<dbReference type="GO" id="GO:0005737">
    <property type="term" value="C:cytoplasm"/>
    <property type="evidence" value="ECO:0007669"/>
    <property type="project" value="UniProtKB-SubCell"/>
</dbReference>
<dbReference type="GO" id="GO:0016607">
    <property type="term" value="C:nuclear speck"/>
    <property type="evidence" value="ECO:0007669"/>
    <property type="project" value="UniProtKB-SubCell"/>
</dbReference>
<dbReference type="GO" id="GO:0005634">
    <property type="term" value="C:nucleus"/>
    <property type="evidence" value="ECO:0000250"/>
    <property type="project" value="UniProtKB"/>
</dbReference>
<dbReference type="GO" id="GO:0005516">
    <property type="term" value="F:calmodulin binding"/>
    <property type="evidence" value="ECO:0007669"/>
    <property type="project" value="UniProtKB-KW"/>
</dbReference>
<dbReference type="GO" id="GO:0001228">
    <property type="term" value="F:DNA-binding transcription activator activity, RNA polymerase II-specific"/>
    <property type="evidence" value="ECO:0007669"/>
    <property type="project" value="TreeGrafter"/>
</dbReference>
<dbReference type="GO" id="GO:0140297">
    <property type="term" value="F:DNA-binding transcription factor binding"/>
    <property type="evidence" value="ECO:0007669"/>
    <property type="project" value="Ensembl"/>
</dbReference>
<dbReference type="GO" id="GO:0000978">
    <property type="term" value="F:RNA polymerase II cis-regulatory region sequence-specific DNA binding"/>
    <property type="evidence" value="ECO:0007669"/>
    <property type="project" value="TreeGrafter"/>
</dbReference>
<dbReference type="GO" id="GO:0030154">
    <property type="term" value="P:cell differentiation"/>
    <property type="evidence" value="ECO:0007669"/>
    <property type="project" value="UniProtKB-KW"/>
</dbReference>
<dbReference type="GO" id="GO:0030238">
    <property type="term" value="P:male sex determination"/>
    <property type="evidence" value="ECO:0007669"/>
    <property type="project" value="InterPro"/>
</dbReference>
<dbReference type="GO" id="GO:0010628">
    <property type="term" value="P:positive regulation of gene expression"/>
    <property type="evidence" value="ECO:0007669"/>
    <property type="project" value="Ensembl"/>
</dbReference>
<dbReference type="GO" id="GO:2000020">
    <property type="term" value="P:positive regulation of male gonad development"/>
    <property type="evidence" value="ECO:0007669"/>
    <property type="project" value="Ensembl"/>
</dbReference>
<dbReference type="GO" id="GO:0007548">
    <property type="term" value="P:sex differentiation"/>
    <property type="evidence" value="ECO:0007669"/>
    <property type="project" value="UniProtKB-KW"/>
</dbReference>
<dbReference type="CDD" id="cd22034">
    <property type="entry name" value="HMG-box_SoxA_SRY"/>
    <property type="match status" value="1"/>
</dbReference>
<dbReference type="FunFam" id="1.10.30.10:FF:000002">
    <property type="entry name" value="transcription factor Sox-2"/>
    <property type="match status" value="1"/>
</dbReference>
<dbReference type="Gene3D" id="1.10.30.10">
    <property type="entry name" value="High mobility group box domain"/>
    <property type="match status" value="1"/>
</dbReference>
<dbReference type="InterPro" id="IPR009071">
    <property type="entry name" value="HMG_box_dom"/>
</dbReference>
<dbReference type="InterPro" id="IPR036910">
    <property type="entry name" value="HMG_box_dom_sf"/>
</dbReference>
<dbReference type="InterPro" id="IPR017253">
    <property type="entry name" value="SRY"/>
</dbReference>
<dbReference type="InterPro" id="IPR050140">
    <property type="entry name" value="SRY-related_HMG-box_TF-like"/>
</dbReference>
<dbReference type="PANTHER" id="PTHR10270:SF161">
    <property type="entry name" value="SEX-DETERMINING REGION Y PROTEIN"/>
    <property type="match status" value="1"/>
</dbReference>
<dbReference type="PANTHER" id="PTHR10270">
    <property type="entry name" value="SOX TRANSCRIPTION FACTOR"/>
    <property type="match status" value="1"/>
</dbReference>
<dbReference type="Pfam" id="PF00505">
    <property type="entry name" value="HMG_box"/>
    <property type="match status" value="1"/>
</dbReference>
<dbReference type="PIRSF" id="PIRSF037653">
    <property type="entry name" value="SRY"/>
    <property type="match status" value="1"/>
</dbReference>
<dbReference type="SMART" id="SM00398">
    <property type="entry name" value="HMG"/>
    <property type="match status" value="1"/>
</dbReference>
<dbReference type="SUPFAM" id="SSF47095">
    <property type="entry name" value="HMG-box"/>
    <property type="match status" value="1"/>
</dbReference>
<dbReference type="PROSITE" id="PS50118">
    <property type="entry name" value="HMG_BOX_2"/>
    <property type="match status" value="1"/>
</dbReference>
<sequence length="227" mass="26307">MQSYASAMLRVFNSDEYNPAALQNIPDSGKSSSVIWTDNSSSKDQWQTGENSKGSVQNRVKRPMNAFIVWSRDQRRKMAVENPQMRNSEISKRLGYQWKLLTEAEKWPFFQEAQKLQAMHREKYPNYKYRPRRKANMLQNNDSLLTADPSSELCGEMQAEDRLFTFSYSDNSKKSTQSTMEHPLGLSPPVNPDSSPQQRDRCSHSTNLQDNRVTLTTKIYADSPFYR</sequence>
<reference key="1">
    <citation type="journal article" date="1993" name="Nature">
        <title>Rapid sequence evolution of the mammalian sex-determining gene SRY.</title>
        <authorList>
            <person name="Whitfield L.S."/>
            <person name="Lovell-Badge R."/>
            <person name="Goodfellow P.N."/>
        </authorList>
    </citation>
    <scope>NUCLEOTIDE SEQUENCE [GENOMIC DNA]</scope>
</reference>
<feature type="chain" id="PRO_0000048651" description="Sex-determining region Y protein">
    <location>
        <begin position="1"/>
        <end position="227"/>
    </location>
</feature>
<feature type="DNA-binding region" description="HMG box" evidence="3">
    <location>
        <begin position="60"/>
        <end position="128"/>
    </location>
</feature>
<feature type="region of interest" description="Disordered" evidence="4">
    <location>
        <begin position="23"/>
        <end position="56"/>
    </location>
</feature>
<feature type="region of interest" description="Disordered" evidence="4">
    <location>
        <begin position="170"/>
        <end position="205"/>
    </location>
</feature>
<feature type="compositionally biased region" description="Polar residues" evidence="4">
    <location>
        <begin position="25"/>
        <end position="56"/>
    </location>
</feature>
<feature type="compositionally biased region" description="Polar residues" evidence="4">
    <location>
        <begin position="170"/>
        <end position="180"/>
    </location>
</feature>
<gene>
    <name type="primary">SRY</name>
    <name type="synonym">TDF</name>
</gene>
<accession>P51501</accession>
<comment type="function">
    <text evidence="1 2">Transcriptional regulator that controls a genetic switch in male development. It is necessary and sufficient for initiating male sex determination by directing the development of supporting cell precursors (pre-Sertoli cells) as Sertoli rather than granulosa cells. Involved in different aspects of gene regulation including promoter activation or repression. Binds to the DNA consensus sequence 5'-[AT]AACAA[AT]-3'. SRY HMG box recognizes DNA by partial intercalation in the minor groove and promotes DNA bending. Also involved in pre-mRNA splicing (By similarity). In male adult brain involved in the maintenance of motor functions of dopaminergic neurons (By similarity).</text>
</comment>
<comment type="subunit">
    <text evidence="2">Interacts with CALM, EP300, HDAC3, KPNB1, ZNF208 isoform KRAB-O, PARP1, SLC9A3R2 and WT1. The interaction with EP300 modulates its DNA-binding activity. The interaction with KPNB1 is sensitive to dissociation by Ran in the GTP-bound form. Interaction with PARP1 impaired its DNA-binding activity.</text>
</comment>
<comment type="subcellular location">
    <subcellularLocation>
        <location evidence="2">Nucleus speckle</location>
    </subcellularLocation>
    <subcellularLocation>
        <location evidence="2">Cytoplasm</location>
    </subcellularLocation>
    <subcellularLocation>
        <location evidence="2">Nucleus</location>
    </subcellularLocation>
</comment>
<comment type="similarity">
    <text evidence="5">Belongs to the SRY family.</text>
</comment>
<comment type="online information" name="Protein Spotlight">
    <link uri="https://www.proteinspotlight.org/back_issues/080"/>
    <text>The tenuous nature of sex - Issue 80 of March 2007</text>
</comment>
<name>SRY_CALJA</name>
<proteinExistence type="inferred from homology"/>
<protein>
    <recommendedName>
        <fullName>Sex-determining region Y protein</fullName>
    </recommendedName>
    <alternativeName>
        <fullName>Testis-determining factor</fullName>
    </alternativeName>
</protein>